<dbReference type="EMBL" id="CU928160">
    <property type="protein sequence ID" value="CAQ99514.1"/>
    <property type="molecule type" value="Genomic_DNA"/>
</dbReference>
<dbReference type="RefSeq" id="WP_000399393.1">
    <property type="nucleotide sequence ID" value="NC_011741.1"/>
</dbReference>
<dbReference type="SMR" id="B7M8H8"/>
<dbReference type="GeneID" id="93774526"/>
<dbReference type="KEGG" id="ecr:ECIAI1_2676"/>
<dbReference type="HOGENOM" id="CLU_066645_1_0_6"/>
<dbReference type="GO" id="GO:0043590">
    <property type="term" value="C:bacterial nucleoid"/>
    <property type="evidence" value="ECO:0007669"/>
    <property type="project" value="TreeGrafter"/>
</dbReference>
<dbReference type="GO" id="GO:0006310">
    <property type="term" value="P:DNA recombination"/>
    <property type="evidence" value="ECO:0007669"/>
    <property type="project" value="UniProtKB-UniRule"/>
</dbReference>
<dbReference type="GO" id="GO:0006302">
    <property type="term" value="P:double-strand break repair"/>
    <property type="evidence" value="ECO:0007669"/>
    <property type="project" value="TreeGrafter"/>
</dbReference>
<dbReference type="FunFam" id="1.20.1440.120:FF:000001">
    <property type="entry name" value="DNA repair protein RecO"/>
    <property type="match status" value="1"/>
</dbReference>
<dbReference type="FunFam" id="2.40.50.140:FF:000074">
    <property type="entry name" value="DNA repair protein RecO"/>
    <property type="match status" value="1"/>
</dbReference>
<dbReference type="Gene3D" id="2.40.50.140">
    <property type="entry name" value="Nucleic acid-binding proteins"/>
    <property type="match status" value="1"/>
</dbReference>
<dbReference type="Gene3D" id="1.20.1440.120">
    <property type="entry name" value="Recombination protein O, C-terminal domain"/>
    <property type="match status" value="1"/>
</dbReference>
<dbReference type="HAMAP" id="MF_00201">
    <property type="entry name" value="RecO"/>
    <property type="match status" value="1"/>
</dbReference>
<dbReference type="InterPro" id="IPR037278">
    <property type="entry name" value="ARFGAP/RecO"/>
</dbReference>
<dbReference type="InterPro" id="IPR022572">
    <property type="entry name" value="DNA_rep/recomb_RecO_N"/>
</dbReference>
<dbReference type="InterPro" id="IPR012340">
    <property type="entry name" value="NA-bd_OB-fold"/>
</dbReference>
<dbReference type="InterPro" id="IPR003717">
    <property type="entry name" value="RecO"/>
</dbReference>
<dbReference type="InterPro" id="IPR042242">
    <property type="entry name" value="RecO_C"/>
</dbReference>
<dbReference type="NCBIfam" id="TIGR00613">
    <property type="entry name" value="reco"/>
    <property type="match status" value="1"/>
</dbReference>
<dbReference type="PANTHER" id="PTHR33991">
    <property type="entry name" value="DNA REPAIR PROTEIN RECO"/>
    <property type="match status" value="1"/>
</dbReference>
<dbReference type="PANTHER" id="PTHR33991:SF1">
    <property type="entry name" value="DNA REPAIR PROTEIN RECO"/>
    <property type="match status" value="1"/>
</dbReference>
<dbReference type="Pfam" id="PF02565">
    <property type="entry name" value="RecO_C"/>
    <property type="match status" value="1"/>
</dbReference>
<dbReference type="Pfam" id="PF11967">
    <property type="entry name" value="RecO_N"/>
    <property type="match status" value="1"/>
</dbReference>
<dbReference type="SUPFAM" id="SSF57863">
    <property type="entry name" value="ArfGap/RecO-like zinc finger"/>
    <property type="match status" value="1"/>
</dbReference>
<dbReference type="SUPFAM" id="SSF50249">
    <property type="entry name" value="Nucleic acid-binding proteins"/>
    <property type="match status" value="1"/>
</dbReference>
<evidence type="ECO:0000255" key="1">
    <source>
        <dbReference type="HAMAP-Rule" id="MF_00201"/>
    </source>
</evidence>
<protein>
    <recommendedName>
        <fullName evidence="1">DNA repair protein RecO</fullName>
    </recommendedName>
    <alternativeName>
        <fullName evidence="1">Recombination protein O</fullName>
    </alternativeName>
</protein>
<accession>B7M8H8</accession>
<reference key="1">
    <citation type="journal article" date="2009" name="PLoS Genet.">
        <title>Organised genome dynamics in the Escherichia coli species results in highly diverse adaptive paths.</title>
        <authorList>
            <person name="Touchon M."/>
            <person name="Hoede C."/>
            <person name="Tenaillon O."/>
            <person name="Barbe V."/>
            <person name="Baeriswyl S."/>
            <person name="Bidet P."/>
            <person name="Bingen E."/>
            <person name="Bonacorsi S."/>
            <person name="Bouchier C."/>
            <person name="Bouvet O."/>
            <person name="Calteau A."/>
            <person name="Chiapello H."/>
            <person name="Clermont O."/>
            <person name="Cruveiller S."/>
            <person name="Danchin A."/>
            <person name="Diard M."/>
            <person name="Dossat C."/>
            <person name="Karoui M.E."/>
            <person name="Frapy E."/>
            <person name="Garry L."/>
            <person name="Ghigo J.M."/>
            <person name="Gilles A.M."/>
            <person name="Johnson J."/>
            <person name="Le Bouguenec C."/>
            <person name="Lescat M."/>
            <person name="Mangenot S."/>
            <person name="Martinez-Jehanne V."/>
            <person name="Matic I."/>
            <person name="Nassif X."/>
            <person name="Oztas S."/>
            <person name="Petit M.A."/>
            <person name="Pichon C."/>
            <person name="Rouy Z."/>
            <person name="Ruf C.S."/>
            <person name="Schneider D."/>
            <person name="Tourret J."/>
            <person name="Vacherie B."/>
            <person name="Vallenet D."/>
            <person name="Medigue C."/>
            <person name="Rocha E.P.C."/>
            <person name="Denamur E."/>
        </authorList>
    </citation>
    <scope>NUCLEOTIDE SEQUENCE [LARGE SCALE GENOMIC DNA]</scope>
    <source>
        <strain>IAI1</strain>
    </source>
</reference>
<organism>
    <name type="scientific">Escherichia coli O8 (strain IAI1)</name>
    <dbReference type="NCBI Taxonomy" id="585034"/>
    <lineage>
        <taxon>Bacteria</taxon>
        <taxon>Pseudomonadati</taxon>
        <taxon>Pseudomonadota</taxon>
        <taxon>Gammaproteobacteria</taxon>
        <taxon>Enterobacterales</taxon>
        <taxon>Enterobacteriaceae</taxon>
        <taxon>Escherichia</taxon>
    </lineage>
</organism>
<proteinExistence type="inferred from homology"/>
<keyword id="KW-0227">DNA damage</keyword>
<keyword id="KW-0233">DNA recombination</keyword>
<keyword id="KW-0234">DNA repair</keyword>
<sequence length="242" mass="27363">MEGWQRAFVLHSRPWSETSLMLDVFTEESGRVRLVAKGARSKRSTLKGALQPFTPLLLRFGGRGEVKTLRSAEAVSLALPLSGITLYSGLYINELLSRVLEYETRFSELFFDYLHCIQSLAGATGTPEPALRRFELALLGHLGYGVNFTHCAGSGEPVDDTMTYRYREEKGFIASVVIDNKTFTGRQLKALNAREFPDADTLRAAKRFTRMALKPYLGGKPLKSRELFRQFMPKRTVKTHYE</sequence>
<feature type="chain" id="PRO_1000118718" description="DNA repair protein RecO">
    <location>
        <begin position="1"/>
        <end position="242"/>
    </location>
</feature>
<comment type="function">
    <text evidence="1">Involved in DNA repair and RecF pathway recombination.</text>
</comment>
<comment type="subunit">
    <text evidence="1">Monomer.</text>
</comment>
<comment type="similarity">
    <text evidence="1">Belongs to the RecO family.</text>
</comment>
<gene>
    <name evidence="1" type="primary">recO</name>
    <name type="ordered locus">ECIAI1_2676</name>
</gene>
<name>RECO_ECO8A</name>